<protein>
    <recommendedName>
        <fullName evidence="1">Coproporphyrin III ferrochelatase 1</fullName>
        <ecNumber evidence="1">4.99.1.9</ecNumber>
    </recommendedName>
</protein>
<gene>
    <name evidence="1" type="primary">cpfC1</name>
    <name type="synonym">hemH-1</name>
    <name type="synonym">hemH1</name>
    <name type="ordered locus">BA_1071</name>
    <name type="ordered locus">GBAA_1071</name>
    <name type="ordered locus">BAS1000</name>
</gene>
<keyword id="KW-0002">3D-structure</keyword>
<keyword id="KW-0963">Cytoplasm</keyword>
<keyword id="KW-0350">Heme biosynthesis</keyword>
<keyword id="KW-0408">Iron</keyword>
<keyword id="KW-0456">Lyase</keyword>
<keyword id="KW-0479">Metal-binding</keyword>
<keyword id="KW-0627">Porphyrin biosynthesis</keyword>
<keyword id="KW-1185">Reference proteome</keyword>
<accession>Q81U22</accession>
<accession>Q6I2A7</accession>
<accession>Q6KW38</accession>
<reference key="1">
    <citation type="journal article" date="2003" name="Nature">
        <title>The genome sequence of Bacillus anthracis Ames and comparison to closely related bacteria.</title>
        <authorList>
            <person name="Read T.D."/>
            <person name="Peterson S.N."/>
            <person name="Tourasse N.J."/>
            <person name="Baillie L.W."/>
            <person name="Paulsen I.T."/>
            <person name="Nelson K.E."/>
            <person name="Tettelin H."/>
            <person name="Fouts D.E."/>
            <person name="Eisen J.A."/>
            <person name="Gill S.R."/>
            <person name="Holtzapple E.K."/>
            <person name="Okstad O.A."/>
            <person name="Helgason E."/>
            <person name="Rilstone J."/>
            <person name="Wu M."/>
            <person name="Kolonay J.F."/>
            <person name="Beanan M.J."/>
            <person name="Dodson R.J."/>
            <person name="Brinkac L.M."/>
            <person name="Gwinn M.L."/>
            <person name="DeBoy R.T."/>
            <person name="Madpu R."/>
            <person name="Daugherty S.C."/>
            <person name="Durkin A.S."/>
            <person name="Haft D.H."/>
            <person name="Nelson W.C."/>
            <person name="Peterson J.D."/>
            <person name="Pop M."/>
            <person name="Khouri H.M."/>
            <person name="Radune D."/>
            <person name="Benton J.L."/>
            <person name="Mahamoud Y."/>
            <person name="Jiang L."/>
            <person name="Hance I.R."/>
            <person name="Weidman J.F."/>
            <person name="Berry K.J."/>
            <person name="Plaut R.D."/>
            <person name="Wolf A.M."/>
            <person name="Watkins K.L."/>
            <person name="Nierman W.C."/>
            <person name="Hazen A."/>
            <person name="Cline R.T."/>
            <person name="Redmond C."/>
            <person name="Thwaite J.E."/>
            <person name="White O."/>
            <person name="Salzberg S.L."/>
            <person name="Thomason B."/>
            <person name="Friedlander A.M."/>
            <person name="Koehler T.M."/>
            <person name="Hanna P.C."/>
            <person name="Kolstoe A.-B."/>
            <person name="Fraser C.M."/>
        </authorList>
    </citation>
    <scope>NUCLEOTIDE SEQUENCE [LARGE SCALE GENOMIC DNA]</scope>
    <source>
        <strain>Ames / isolate Porton</strain>
    </source>
</reference>
<reference key="2">
    <citation type="journal article" date="2009" name="J. Bacteriol.">
        <title>The complete genome sequence of Bacillus anthracis Ames 'Ancestor'.</title>
        <authorList>
            <person name="Ravel J."/>
            <person name="Jiang L."/>
            <person name="Stanley S.T."/>
            <person name="Wilson M.R."/>
            <person name="Decker R.S."/>
            <person name="Read T.D."/>
            <person name="Worsham P."/>
            <person name="Keim P.S."/>
            <person name="Salzberg S.L."/>
            <person name="Fraser-Liggett C.M."/>
            <person name="Rasko D.A."/>
        </authorList>
    </citation>
    <scope>NUCLEOTIDE SEQUENCE [LARGE SCALE GENOMIC DNA]</scope>
    <source>
        <strain>Ames ancestor</strain>
    </source>
</reference>
<reference key="3">
    <citation type="submission" date="2004-01" db="EMBL/GenBank/DDBJ databases">
        <title>Complete genome sequence of Bacillus anthracis Sterne.</title>
        <authorList>
            <person name="Brettin T.S."/>
            <person name="Bruce D."/>
            <person name="Challacombe J.F."/>
            <person name="Gilna P."/>
            <person name="Han C."/>
            <person name="Hill K."/>
            <person name="Hitchcock P."/>
            <person name="Jackson P."/>
            <person name="Keim P."/>
            <person name="Longmire J."/>
            <person name="Lucas S."/>
            <person name="Okinaka R."/>
            <person name="Richardson P."/>
            <person name="Rubin E."/>
            <person name="Tice H."/>
        </authorList>
    </citation>
    <scope>NUCLEOTIDE SEQUENCE [LARGE SCALE GENOMIC DNA]</scope>
    <source>
        <strain>Sterne</strain>
    </source>
</reference>
<dbReference type="EC" id="4.99.1.9" evidence="1"/>
<dbReference type="EMBL" id="AE016879">
    <property type="protein sequence ID" value="AAP25051.1"/>
    <property type="molecule type" value="Genomic_DNA"/>
</dbReference>
<dbReference type="EMBL" id="AE017334">
    <property type="protein sequence ID" value="AAT30171.1"/>
    <property type="molecule type" value="Genomic_DNA"/>
</dbReference>
<dbReference type="EMBL" id="AE017225">
    <property type="protein sequence ID" value="AAT53324.1"/>
    <property type="molecule type" value="Genomic_DNA"/>
</dbReference>
<dbReference type="RefSeq" id="NP_843565.1">
    <property type="nucleotide sequence ID" value="NC_003997.3"/>
</dbReference>
<dbReference type="RefSeq" id="YP_027273.1">
    <property type="nucleotide sequence ID" value="NC_005945.1"/>
</dbReference>
<dbReference type="PDB" id="2C8J">
    <property type="method" value="X-ray"/>
    <property type="resolution" value="2.10 A"/>
    <property type="chains" value="A/B=1-311"/>
</dbReference>
<dbReference type="PDBsum" id="2C8J"/>
<dbReference type="SMR" id="Q81U22"/>
<dbReference type="IntAct" id="Q81U22">
    <property type="interactions" value="14"/>
</dbReference>
<dbReference type="STRING" id="261594.GBAA_1071"/>
<dbReference type="DNASU" id="1089001"/>
<dbReference type="GeneID" id="45021099"/>
<dbReference type="KEGG" id="ban:BA_1071"/>
<dbReference type="KEGG" id="banh:HYU01_05630"/>
<dbReference type="KEGG" id="bar:GBAA_1071"/>
<dbReference type="KEGG" id="bat:BAS1000"/>
<dbReference type="PATRIC" id="fig|198094.11.peg.1058"/>
<dbReference type="eggNOG" id="COG0276">
    <property type="taxonomic scope" value="Bacteria"/>
</dbReference>
<dbReference type="HOGENOM" id="CLU_018884_2_1_9"/>
<dbReference type="OMA" id="DPYHCEC"/>
<dbReference type="OrthoDB" id="9776380at2"/>
<dbReference type="UniPathway" id="UPA00252"/>
<dbReference type="EvolutionaryTrace" id="Q81U22"/>
<dbReference type="Proteomes" id="UP000000427">
    <property type="component" value="Chromosome"/>
</dbReference>
<dbReference type="Proteomes" id="UP000000594">
    <property type="component" value="Chromosome"/>
</dbReference>
<dbReference type="GO" id="GO:0005737">
    <property type="term" value="C:cytoplasm"/>
    <property type="evidence" value="ECO:0007669"/>
    <property type="project" value="UniProtKB-SubCell"/>
</dbReference>
<dbReference type="GO" id="GO:0004325">
    <property type="term" value="F:ferrochelatase activity"/>
    <property type="evidence" value="ECO:0007669"/>
    <property type="project" value="UniProtKB-UniRule"/>
</dbReference>
<dbReference type="GO" id="GO:0046872">
    <property type="term" value="F:metal ion binding"/>
    <property type="evidence" value="ECO:0007669"/>
    <property type="project" value="UniProtKB-KW"/>
</dbReference>
<dbReference type="GO" id="GO:0006783">
    <property type="term" value="P:heme biosynthetic process"/>
    <property type="evidence" value="ECO:0007669"/>
    <property type="project" value="UniProtKB-UniRule"/>
</dbReference>
<dbReference type="CDD" id="cd00419">
    <property type="entry name" value="Ferrochelatase_C"/>
    <property type="match status" value="1"/>
</dbReference>
<dbReference type="CDD" id="cd03411">
    <property type="entry name" value="Ferrochelatase_N"/>
    <property type="match status" value="1"/>
</dbReference>
<dbReference type="FunFam" id="3.40.50.1400:FF:000009">
    <property type="entry name" value="Ferrochelatase"/>
    <property type="match status" value="1"/>
</dbReference>
<dbReference type="Gene3D" id="3.40.50.1400">
    <property type="match status" value="2"/>
</dbReference>
<dbReference type="HAMAP" id="MF_00323">
    <property type="entry name" value="Ferrochelatase"/>
    <property type="match status" value="1"/>
</dbReference>
<dbReference type="InterPro" id="IPR001015">
    <property type="entry name" value="Ferrochelatase"/>
</dbReference>
<dbReference type="InterPro" id="IPR019772">
    <property type="entry name" value="Ferrochelatase_AS"/>
</dbReference>
<dbReference type="InterPro" id="IPR033644">
    <property type="entry name" value="Ferrochelatase_C"/>
</dbReference>
<dbReference type="InterPro" id="IPR033659">
    <property type="entry name" value="Ferrochelatase_N"/>
</dbReference>
<dbReference type="NCBIfam" id="TIGR00109">
    <property type="entry name" value="hemH"/>
    <property type="match status" value="1"/>
</dbReference>
<dbReference type="NCBIfam" id="NF009095">
    <property type="entry name" value="PRK12435.1"/>
    <property type="match status" value="1"/>
</dbReference>
<dbReference type="PANTHER" id="PTHR11108">
    <property type="entry name" value="FERROCHELATASE"/>
    <property type="match status" value="1"/>
</dbReference>
<dbReference type="PANTHER" id="PTHR11108:SF1">
    <property type="entry name" value="FERROCHELATASE, MITOCHONDRIAL"/>
    <property type="match status" value="1"/>
</dbReference>
<dbReference type="Pfam" id="PF00762">
    <property type="entry name" value="Ferrochelatase"/>
    <property type="match status" value="1"/>
</dbReference>
<dbReference type="SUPFAM" id="SSF53800">
    <property type="entry name" value="Chelatase"/>
    <property type="match status" value="1"/>
</dbReference>
<dbReference type="PROSITE" id="PS00534">
    <property type="entry name" value="FERROCHELATASE"/>
    <property type="match status" value="1"/>
</dbReference>
<evidence type="ECO:0000255" key="1">
    <source>
        <dbReference type="HAMAP-Rule" id="MF_00323"/>
    </source>
</evidence>
<evidence type="ECO:0000305" key="2"/>
<evidence type="ECO:0007829" key="3">
    <source>
        <dbReference type="PDB" id="2C8J"/>
    </source>
</evidence>
<organism>
    <name type="scientific">Bacillus anthracis</name>
    <dbReference type="NCBI Taxonomy" id="1392"/>
    <lineage>
        <taxon>Bacteria</taxon>
        <taxon>Bacillati</taxon>
        <taxon>Bacillota</taxon>
        <taxon>Bacilli</taxon>
        <taxon>Bacillales</taxon>
        <taxon>Bacillaceae</taxon>
        <taxon>Bacillus</taxon>
        <taxon>Bacillus cereus group</taxon>
    </lineage>
</organism>
<feature type="chain" id="PRO_0000175102" description="Coproporphyrin III ferrochelatase 1">
    <location>
        <begin position="1"/>
        <end position="311"/>
    </location>
</feature>
<feature type="binding site" description="axial binding residue" evidence="1">
    <location>
        <position position="12"/>
    </location>
    <ligand>
        <name>Fe-coproporphyrin III</name>
        <dbReference type="ChEBI" id="CHEBI:68438"/>
    </ligand>
    <ligandPart>
        <name>Fe</name>
        <dbReference type="ChEBI" id="CHEBI:18248"/>
    </ligandPart>
</feature>
<feature type="binding site" evidence="1">
    <location>
        <position position="29"/>
    </location>
    <ligand>
        <name>Fe-coproporphyrin III</name>
        <dbReference type="ChEBI" id="CHEBI:68438"/>
    </ligand>
</feature>
<feature type="binding site" evidence="1">
    <location>
        <begin position="45"/>
        <end position="46"/>
    </location>
    <ligand>
        <name>Fe-coproporphyrin III</name>
        <dbReference type="ChEBI" id="CHEBI:68438"/>
    </ligand>
</feature>
<feature type="binding site" evidence="1">
    <location>
        <position position="53"/>
    </location>
    <ligand>
        <name>Fe-coproporphyrin III</name>
        <dbReference type="ChEBI" id="CHEBI:68438"/>
    </ligand>
</feature>
<feature type="binding site" evidence="1">
    <location>
        <position position="124"/>
    </location>
    <ligand>
        <name>Fe-coproporphyrin III</name>
        <dbReference type="ChEBI" id="CHEBI:68438"/>
    </ligand>
</feature>
<feature type="binding site" evidence="1">
    <location>
        <position position="182"/>
    </location>
    <ligand>
        <name>Fe(2+)</name>
        <dbReference type="ChEBI" id="CHEBI:29033"/>
    </ligand>
</feature>
<feature type="binding site" evidence="1">
    <location>
        <position position="263"/>
    </location>
    <ligand>
        <name>Fe(2+)</name>
        <dbReference type="ChEBI" id="CHEBI:29033"/>
    </ligand>
</feature>
<feature type="strand" evidence="3">
    <location>
        <begin position="3"/>
        <end position="11"/>
    </location>
</feature>
<feature type="helix" evidence="3">
    <location>
        <begin position="18"/>
        <end position="20"/>
    </location>
</feature>
<feature type="helix" evidence="3">
    <location>
        <begin position="21"/>
        <end position="28"/>
    </location>
</feature>
<feature type="turn" evidence="3">
    <location>
        <begin position="29"/>
        <end position="31"/>
    </location>
</feature>
<feature type="helix" evidence="3">
    <location>
        <begin position="36"/>
        <end position="48"/>
    </location>
</feature>
<feature type="helix" evidence="3">
    <location>
        <begin position="53"/>
        <end position="73"/>
    </location>
</feature>
<feature type="strand" evidence="3">
    <location>
        <begin position="75"/>
        <end position="91"/>
    </location>
</feature>
<feature type="helix" evidence="3">
    <location>
        <begin position="92"/>
        <end position="101"/>
    </location>
</feature>
<feature type="strand" evidence="3">
    <location>
        <begin position="106"/>
        <end position="115"/>
    </location>
</feature>
<feature type="helix" evidence="3">
    <location>
        <begin position="118"/>
        <end position="123"/>
    </location>
</feature>
<feature type="helix" evidence="3">
    <location>
        <begin position="125"/>
        <end position="135"/>
    </location>
</feature>
<feature type="strand" evidence="3">
    <location>
        <begin position="139"/>
        <end position="142"/>
    </location>
</feature>
<feature type="helix" evidence="3">
    <location>
        <begin position="150"/>
        <end position="165"/>
    </location>
</feature>
<feature type="helix" evidence="3">
    <location>
        <begin position="169"/>
        <end position="173"/>
    </location>
</feature>
<feature type="strand" evidence="3">
    <location>
        <begin position="175"/>
        <end position="182"/>
    </location>
</feature>
<feature type="helix" evidence="3">
    <location>
        <begin position="187"/>
        <end position="191"/>
    </location>
</feature>
<feature type="helix" evidence="3">
    <location>
        <begin position="195"/>
        <end position="210"/>
    </location>
</feature>
<feature type="strand" evidence="3">
    <location>
        <begin position="215"/>
        <end position="220"/>
    </location>
</feature>
<feature type="strand" evidence="3">
    <location>
        <begin position="229"/>
        <end position="231"/>
    </location>
</feature>
<feature type="helix" evidence="3">
    <location>
        <begin position="234"/>
        <end position="244"/>
    </location>
</feature>
<feature type="strand" evidence="3">
    <location>
        <begin position="248"/>
        <end position="253"/>
    </location>
</feature>
<feature type="helix" evidence="3">
    <location>
        <begin position="262"/>
        <end position="265"/>
    </location>
</feature>
<feature type="turn" evidence="3">
    <location>
        <begin position="266"/>
        <end position="270"/>
    </location>
</feature>
<feature type="helix" evidence="3">
    <location>
        <begin position="271"/>
        <end position="279"/>
    </location>
</feature>
<feature type="strand" evidence="3">
    <location>
        <begin position="282"/>
        <end position="284"/>
    </location>
</feature>
<feature type="helix" evidence="3">
    <location>
        <begin position="293"/>
        <end position="308"/>
    </location>
</feature>
<name>CPFC1_BACAN</name>
<proteinExistence type="evidence at protein level"/>
<sequence length="311" mass="35349">MKKKIGLLVMAYGTPYKEEDIERYYTHIRRGRKPSPEMLEDLTERYRAIGGISPLATITLEQAKKLEKRLNEVQDEVEYHMYLGLKHIEPFIEDAVKEMHNDGIQDAIALVLAPHYSTFSVKSYVGRAQEEAEKLGNLTIHGIDSWYKEPKFIQYWVDAVKSIYSGMSDAEREKAVLIVSAHSLPEKIIAMGDPYPDQLNETADYIARGAEVANYAVGWQSAGNTPDPWIGPDVQDLTRELNEKYGYTSFVYAPVGFVAEHLEVLYDNDFECKVVTDEIGAKYYRPEMPNASDAFIDCLTDVVVKKKESVM</sequence>
<comment type="function">
    <text evidence="1">Involved in coproporphyrin-dependent heme b biosynthesis. Catalyzes the insertion of ferrous iron into coproporphyrin III to form Fe-coproporphyrin III.</text>
</comment>
<comment type="catalytic activity">
    <reaction evidence="1">
        <text>Fe-coproporphyrin III + 2 H(+) = coproporphyrin III + Fe(2+)</text>
        <dbReference type="Rhea" id="RHEA:49572"/>
        <dbReference type="ChEBI" id="CHEBI:15378"/>
        <dbReference type="ChEBI" id="CHEBI:29033"/>
        <dbReference type="ChEBI" id="CHEBI:68438"/>
        <dbReference type="ChEBI" id="CHEBI:131725"/>
        <dbReference type="EC" id="4.99.1.9"/>
    </reaction>
    <physiologicalReaction direction="right-to-left" evidence="1">
        <dbReference type="Rhea" id="RHEA:49574"/>
    </physiologicalReaction>
</comment>
<comment type="pathway">
    <text evidence="1">Porphyrin-containing compound metabolism; protoheme biosynthesis.</text>
</comment>
<comment type="subcellular location">
    <subcellularLocation>
        <location evidence="1">Cytoplasm</location>
    </subcellularLocation>
</comment>
<comment type="similarity">
    <text evidence="1 2">Belongs to the ferrochelatase family.</text>
</comment>